<dbReference type="EC" id="3.4.23.1"/>
<dbReference type="EMBL" id="AY330769">
    <property type="protein sequence ID" value="AAQ95219.1"/>
    <property type="molecule type" value="mRNA"/>
</dbReference>
<dbReference type="PIR" id="A92157">
    <property type="entry name" value="PEBO"/>
</dbReference>
<dbReference type="RefSeq" id="NP_001001600.2">
    <property type="nucleotide sequence ID" value="NM_001001600.2"/>
</dbReference>
<dbReference type="SMR" id="P00792"/>
<dbReference type="FunCoup" id="P00792">
    <property type="interactions" value="113"/>
</dbReference>
<dbReference type="STRING" id="9913.ENSBTAP00000019640"/>
<dbReference type="MEROPS" id="A01.001"/>
<dbReference type="PaxDb" id="9913-ENSBTAP00000019640"/>
<dbReference type="GeneID" id="414350"/>
<dbReference type="KEGG" id="bta:414350"/>
<dbReference type="CTD" id="5222"/>
<dbReference type="eggNOG" id="KOG1339">
    <property type="taxonomic scope" value="Eukaryota"/>
</dbReference>
<dbReference type="InParanoid" id="P00792"/>
<dbReference type="OrthoDB" id="771136at2759"/>
<dbReference type="Proteomes" id="UP000009136">
    <property type="component" value="Unplaced"/>
</dbReference>
<dbReference type="GO" id="GO:0005576">
    <property type="term" value="C:extracellular region"/>
    <property type="evidence" value="ECO:0007669"/>
    <property type="project" value="UniProtKB-SubCell"/>
</dbReference>
<dbReference type="GO" id="GO:0004190">
    <property type="term" value="F:aspartic-type endopeptidase activity"/>
    <property type="evidence" value="ECO:0000318"/>
    <property type="project" value="GO_Central"/>
</dbReference>
<dbReference type="GO" id="GO:0007586">
    <property type="term" value="P:digestion"/>
    <property type="evidence" value="ECO:0007669"/>
    <property type="project" value="UniProtKB-KW"/>
</dbReference>
<dbReference type="GO" id="GO:0006508">
    <property type="term" value="P:proteolysis"/>
    <property type="evidence" value="ECO:0000318"/>
    <property type="project" value="GO_Central"/>
</dbReference>
<dbReference type="CDD" id="cd05478">
    <property type="entry name" value="pepsin_A"/>
    <property type="match status" value="1"/>
</dbReference>
<dbReference type="FunFam" id="2.40.70.10:FF:000006">
    <property type="entry name" value="Cathepsin E"/>
    <property type="match status" value="1"/>
</dbReference>
<dbReference type="FunFam" id="2.40.70.10:FF:000004">
    <property type="entry name" value="Pepsin A"/>
    <property type="match status" value="1"/>
</dbReference>
<dbReference type="Gene3D" id="6.10.140.60">
    <property type="match status" value="1"/>
</dbReference>
<dbReference type="Gene3D" id="2.40.70.10">
    <property type="entry name" value="Acid Proteases"/>
    <property type="match status" value="2"/>
</dbReference>
<dbReference type="InterPro" id="IPR001461">
    <property type="entry name" value="Aspartic_peptidase_A1"/>
</dbReference>
<dbReference type="InterPro" id="IPR001969">
    <property type="entry name" value="Aspartic_peptidase_AS"/>
</dbReference>
<dbReference type="InterPro" id="IPR012848">
    <property type="entry name" value="Aspartic_peptidase_N"/>
</dbReference>
<dbReference type="InterPro" id="IPR034162">
    <property type="entry name" value="Pepsin_A"/>
</dbReference>
<dbReference type="InterPro" id="IPR033121">
    <property type="entry name" value="PEPTIDASE_A1"/>
</dbReference>
<dbReference type="InterPro" id="IPR021109">
    <property type="entry name" value="Peptidase_aspartic_dom_sf"/>
</dbReference>
<dbReference type="PANTHER" id="PTHR47966">
    <property type="entry name" value="BETA-SITE APP-CLEAVING ENZYME, ISOFORM A-RELATED"/>
    <property type="match status" value="1"/>
</dbReference>
<dbReference type="PANTHER" id="PTHR47966:SF22">
    <property type="entry name" value="PEPSIN A-3-RELATED"/>
    <property type="match status" value="1"/>
</dbReference>
<dbReference type="Pfam" id="PF07966">
    <property type="entry name" value="A1_Propeptide"/>
    <property type="match status" value="1"/>
</dbReference>
<dbReference type="Pfam" id="PF00026">
    <property type="entry name" value="Asp"/>
    <property type="match status" value="1"/>
</dbReference>
<dbReference type="PRINTS" id="PR00792">
    <property type="entry name" value="PEPSIN"/>
</dbReference>
<dbReference type="SUPFAM" id="SSF50630">
    <property type="entry name" value="Acid proteases"/>
    <property type="match status" value="1"/>
</dbReference>
<dbReference type="PROSITE" id="PS00141">
    <property type="entry name" value="ASP_PROTEASE"/>
    <property type="match status" value="2"/>
</dbReference>
<dbReference type="PROSITE" id="PS51767">
    <property type="entry name" value="PEPTIDASE_A1"/>
    <property type="match status" value="1"/>
</dbReference>
<proteinExistence type="evidence at protein level"/>
<reference key="1">
    <citation type="journal article" date="2004" name="Appl. Environ. Microbiol.">
        <title>Cloning of the authentic bovine gene encoding pepsinogen A and its expression in microbial cells.</title>
        <authorList>
            <person name="Munoz R."/>
            <person name="Garcia J.L."/>
            <person name="Carrascosa A.V."/>
            <person name="Gonzalez R."/>
        </authorList>
    </citation>
    <scope>NUCLEOTIDE SEQUENCE [MRNA]</scope>
</reference>
<reference key="2">
    <citation type="journal article" date="1974" name="J. Biol. Chem.">
        <title>The activation of bovine pepsinogen. Sequence of the peptides released, identification of a pepsin inhibitor.</title>
        <authorList>
            <person name="Harboe M.K."/>
            <person name="Andersen P.M."/>
            <person name="Foltmann B."/>
            <person name="Kay J."/>
            <person name="Kassell B."/>
        </authorList>
    </citation>
    <scope>PROTEIN SEQUENCE OF 2-48</scope>
</reference>
<reference key="3">
    <citation type="journal article" date="1975" name="FEBS Lett.">
        <title>Bovine pepsin: the sequence of the first 65 amino acid residues (completing the sequence of the first 110 residues of bovine pepsinogen).</title>
        <authorList>
            <person name="Harboe M.K."/>
            <person name="Foltmann B."/>
        </authorList>
    </citation>
    <scope>PROTEIN SEQUENCE OF 42-111</scope>
</reference>
<feature type="propeptide" id="PRO_0000026007" description="Activation peptide">
    <location>
        <begin position="1"/>
        <end position="42"/>
    </location>
</feature>
<feature type="chain" id="PRO_0000026008" description="Pepsin A">
    <location>
        <begin position="43"/>
        <end position="372"/>
    </location>
</feature>
<feature type="domain" description="Peptidase A1" evidence="3">
    <location>
        <begin position="60"/>
        <end position="369"/>
    </location>
</feature>
<feature type="active site" evidence="4">
    <location>
        <position position="78"/>
    </location>
</feature>
<feature type="active site" evidence="4">
    <location>
        <position position="261"/>
    </location>
</feature>
<feature type="modified residue" description="Phosphoserine" evidence="2">
    <location>
        <position position="114"/>
    </location>
</feature>
<feature type="disulfide bond" evidence="5">
    <location>
        <begin position="91"/>
        <end position="96"/>
    </location>
</feature>
<feature type="disulfide bond" evidence="1">
    <location>
        <begin position="252"/>
        <end position="256"/>
    </location>
</feature>
<feature type="disulfide bond" evidence="1">
    <location>
        <begin position="295"/>
        <end position="328"/>
    </location>
</feature>
<organism>
    <name type="scientific">Bos taurus</name>
    <name type="common">Bovine</name>
    <dbReference type="NCBI Taxonomy" id="9913"/>
    <lineage>
        <taxon>Eukaryota</taxon>
        <taxon>Metazoa</taxon>
        <taxon>Chordata</taxon>
        <taxon>Craniata</taxon>
        <taxon>Vertebrata</taxon>
        <taxon>Euteleostomi</taxon>
        <taxon>Mammalia</taxon>
        <taxon>Eutheria</taxon>
        <taxon>Laurasiatheria</taxon>
        <taxon>Artiodactyla</taxon>
        <taxon>Ruminantia</taxon>
        <taxon>Pecora</taxon>
        <taxon>Bovidae</taxon>
        <taxon>Bovinae</taxon>
        <taxon>Bos</taxon>
    </lineage>
</organism>
<name>PEPA_BOVIN</name>
<comment type="function">
    <text>Shows particularly broad specificity; although bonds involving phenylalanine and leucine are preferred, many others are also cleaved to some extent.</text>
</comment>
<comment type="catalytic activity">
    <reaction evidence="4">
        <text>Preferential cleavage: hydrophobic, preferably aromatic, residues in P1 and P1' positions. Cleaves 1-Phe-|-Val-2, 4-Gln-|-His-5, 13-Glu-|-Ala-14, 14-Ala-|-Leu-15, 15-Leu-|-Tyr-16, 16-Tyr-|-Leu-17, 23-Gly-|-Phe-24, 24-Phe-|-Phe-25 and 25-Phe-|-Tyr-26 bonds in the B chain of insulin.</text>
        <dbReference type="EC" id="3.4.23.1"/>
    </reaction>
</comment>
<comment type="subcellular location">
    <subcellularLocation>
        <location>Secreted</location>
    </subcellularLocation>
</comment>
<comment type="similarity">
    <text evidence="6">Belongs to the peptidase A1 family.</text>
</comment>
<accession>P00792</accession>
<accession>Q6VRA9</accession>
<gene>
    <name type="primary">PGA</name>
</gene>
<sequence>MSVVKIPLVKKKSLRQNLIENGKLKEFMRTHKYNLGSKYIREAATLVSEQPLQNYLDTEYFGTIGIGTPAQDFTVIFDTGSSNLWVPSIYCSSEACTNHNRFNPQDSSTYEATSETLSITYGTGSMTGILGYDTVQVGGISDTNQIFGLSETEPGSFLYYAPFDGILGLAYPSISSSGATPVFDNIWDQGLVSQDLFSVYLSSNEESGSVVIFGDIDSSYYSGSLNWVPVSVEGYWQITVDSITMNGESIACSDGCQAIVDTGTSLLAGPTTAISNIQSYIGASEDSSGEVVISCSSIDSLPDIVFTINGVQYPVPPSAYILQSNGICSSGFEGMDISTSSGDLWILGDVFIRQYFTVFDRGNNQIGLAPVA</sequence>
<keyword id="KW-0064">Aspartyl protease</keyword>
<keyword id="KW-0222">Digestion</keyword>
<keyword id="KW-0903">Direct protein sequencing</keyword>
<keyword id="KW-1015">Disulfide bond</keyword>
<keyword id="KW-0378">Hydrolase</keyword>
<keyword id="KW-0597">Phosphoprotein</keyword>
<keyword id="KW-0645">Protease</keyword>
<keyword id="KW-1185">Reference proteome</keyword>
<keyword id="KW-0964">Secreted</keyword>
<keyword id="KW-0865">Zymogen</keyword>
<evidence type="ECO:0000250" key="1"/>
<evidence type="ECO:0000250" key="2">
    <source>
        <dbReference type="UniProtKB" id="P03954"/>
    </source>
</evidence>
<evidence type="ECO:0000255" key="3">
    <source>
        <dbReference type="PROSITE-ProRule" id="PRU01103"/>
    </source>
</evidence>
<evidence type="ECO:0000255" key="4">
    <source>
        <dbReference type="PROSITE-ProRule" id="PRU10094"/>
    </source>
</evidence>
<evidence type="ECO:0000269" key="5">
    <source>
    </source>
</evidence>
<evidence type="ECO:0000305" key="6"/>
<protein>
    <recommendedName>
        <fullName>Pepsin A</fullName>
        <ecNumber>3.4.23.1</ecNumber>
    </recommendedName>
</protein>